<feature type="initiator methionine" description="Removed" evidence="1">
    <location>
        <position position="1"/>
    </location>
</feature>
<feature type="chain" id="PRO_0000086457" description="Serine/threonine-protein kinase OSR1">
    <location>
        <begin position="2"/>
        <end position="527"/>
    </location>
</feature>
<feature type="domain" description="Protein kinase" evidence="3">
    <location>
        <begin position="17"/>
        <end position="291"/>
    </location>
</feature>
<feature type="region of interest" description="Disordered" evidence="4">
    <location>
        <begin position="313"/>
        <end position="356"/>
    </location>
</feature>
<feature type="region of interest" description="Disordered" evidence="4">
    <location>
        <begin position="392"/>
        <end position="429"/>
    </location>
</feature>
<feature type="compositionally biased region" description="Acidic residues" evidence="4">
    <location>
        <begin position="334"/>
        <end position="348"/>
    </location>
</feature>
<feature type="active site" description="Proton acceptor" evidence="2 3">
    <location>
        <position position="146"/>
    </location>
</feature>
<feature type="binding site" evidence="2 3">
    <location>
        <begin position="23"/>
        <end position="31"/>
    </location>
    <ligand>
        <name>ATP</name>
        <dbReference type="ChEBI" id="CHEBI:30616"/>
    </ligand>
</feature>
<feature type="binding site" evidence="1 3">
    <location>
        <position position="46"/>
    </location>
    <ligand>
        <name>ATP</name>
        <dbReference type="ChEBI" id="CHEBI:30616"/>
    </ligand>
</feature>
<feature type="modified residue" description="N-acetylserine" evidence="1">
    <location>
        <position position="2"/>
    </location>
</feature>
<feature type="modified residue" description="Phosphothreonine; by WNK4" evidence="11">
    <location>
        <position position="185"/>
    </location>
</feature>
<feature type="modified residue" description="Phosphothreonine" evidence="1">
    <location>
        <position position="310"/>
    </location>
</feature>
<feature type="modified residue" description="Phosphoserine" evidence="1">
    <location>
        <position position="324"/>
    </location>
</feature>
<feature type="modified residue" description="Phosphoserine; by WNK1" evidence="11">
    <location>
        <position position="325"/>
    </location>
</feature>
<feature type="modified residue" description="Phosphoserine" evidence="17 18 19">
    <location>
        <position position="339"/>
    </location>
</feature>
<feature type="modified residue" description="Phosphoserine" evidence="1">
    <location>
        <position position="347"/>
    </location>
</feature>
<feature type="modified residue" description="Phosphoserine" evidence="1">
    <location>
        <position position="359"/>
    </location>
</feature>
<feature type="modified residue" description="Phosphoserine" evidence="1">
    <location>
        <position position="427"/>
    </location>
</feature>
<feature type="mutagenesis site" description="Impaired phosphorylation by WNK4 and activation. Knockin mice are unable to activate SLC12A3/NCC." evidence="11">
    <original>T</original>
    <variation>A</variation>
    <location>
        <position position="185"/>
    </location>
</feature>
<feature type="sequence conflict" description="In Ref. 2; BAC27551." evidence="14" ref="2">
    <original>V</original>
    <variation>F</variation>
    <location>
        <position position="201"/>
    </location>
</feature>
<dbReference type="EC" id="2.7.11.1" evidence="8"/>
<dbReference type="EMBL" id="BC060645">
    <property type="protein sequence ID" value="AAH60645.1"/>
    <property type="molecule type" value="mRNA"/>
</dbReference>
<dbReference type="EMBL" id="AK031790">
    <property type="protein sequence ID" value="BAC27551.1"/>
    <property type="status" value="ALT_INIT"/>
    <property type="molecule type" value="mRNA"/>
</dbReference>
<dbReference type="EMBL" id="AK075837">
    <property type="protein sequence ID" value="BAC35996.1"/>
    <property type="status" value="ALT_INIT"/>
    <property type="molecule type" value="mRNA"/>
</dbReference>
<dbReference type="CCDS" id="CCDS57714.1"/>
<dbReference type="RefSeq" id="NP_001346511.1">
    <property type="nucleotide sequence ID" value="NM_001359582.1"/>
</dbReference>
<dbReference type="RefSeq" id="NP_598746.2">
    <property type="nucleotide sequence ID" value="NM_133985.2"/>
</dbReference>
<dbReference type="RefSeq" id="XP_006511982.1">
    <property type="nucleotide sequence ID" value="XM_006511919.3"/>
</dbReference>
<dbReference type="SMR" id="Q6P9R2"/>
<dbReference type="BioGRID" id="224395">
    <property type="interactions" value="8"/>
</dbReference>
<dbReference type="ELM" id="Q6P9R2"/>
<dbReference type="FunCoup" id="Q6P9R2">
    <property type="interactions" value="3571"/>
</dbReference>
<dbReference type="IntAct" id="Q6P9R2">
    <property type="interactions" value="3"/>
</dbReference>
<dbReference type="STRING" id="10090.ENSMUSP00000042155"/>
<dbReference type="GlyGen" id="Q6P9R2">
    <property type="glycosylation" value="1 site, 1 O-linked glycan (1 site)"/>
</dbReference>
<dbReference type="iPTMnet" id="Q6P9R2"/>
<dbReference type="PhosphoSitePlus" id="Q6P9R2"/>
<dbReference type="SwissPalm" id="Q6P9R2"/>
<dbReference type="jPOST" id="Q6P9R2"/>
<dbReference type="PaxDb" id="10090-ENSMUSP00000042155"/>
<dbReference type="PeptideAtlas" id="Q6P9R2"/>
<dbReference type="ProteomicsDB" id="294356"/>
<dbReference type="Pumba" id="Q6P9R2"/>
<dbReference type="Antibodypedia" id="2101">
    <property type="antibodies" value="550 antibodies from 37 providers"/>
</dbReference>
<dbReference type="DNASU" id="108737"/>
<dbReference type="Ensembl" id="ENSMUST00000040853.11">
    <property type="protein sequence ID" value="ENSMUSP00000042155.5"/>
    <property type="gene ID" value="ENSMUSG00000036737.13"/>
</dbReference>
<dbReference type="GeneID" id="108737"/>
<dbReference type="KEGG" id="mmu:108737"/>
<dbReference type="UCSC" id="uc009sap.2">
    <property type="organism name" value="mouse"/>
</dbReference>
<dbReference type="AGR" id="MGI:1917378"/>
<dbReference type="CTD" id="9943"/>
<dbReference type="MGI" id="MGI:1917378">
    <property type="gene designation" value="Oxsr1"/>
</dbReference>
<dbReference type="VEuPathDB" id="HostDB:ENSMUSG00000036737"/>
<dbReference type="eggNOG" id="KOG0582">
    <property type="taxonomic scope" value="Eukaryota"/>
</dbReference>
<dbReference type="GeneTree" id="ENSGT00940000162134"/>
<dbReference type="HOGENOM" id="CLU_000288_111_1_1"/>
<dbReference type="InParanoid" id="Q6P9R2"/>
<dbReference type="OMA" id="KMRTANC"/>
<dbReference type="OrthoDB" id="8693905at2759"/>
<dbReference type="PhylomeDB" id="Q6P9R2"/>
<dbReference type="TreeFam" id="TF105339"/>
<dbReference type="BioGRID-ORCS" id="108737">
    <property type="hits" value="14 hits in 82 CRISPR screens"/>
</dbReference>
<dbReference type="ChiTaRS" id="Oxsr1">
    <property type="organism name" value="mouse"/>
</dbReference>
<dbReference type="PRO" id="PR:Q6P9R2"/>
<dbReference type="Proteomes" id="UP000000589">
    <property type="component" value="Chromosome 9"/>
</dbReference>
<dbReference type="RNAct" id="Q6P9R2">
    <property type="molecule type" value="protein"/>
</dbReference>
<dbReference type="Bgee" id="ENSMUSG00000036737">
    <property type="expression patterns" value="Expressed in hindlimb stylopod muscle and 243 other cell types or tissues"/>
</dbReference>
<dbReference type="ExpressionAtlas" id="Q6P9R2">
    <property type="expression patterns" value="baseline and differential"/>
</dbReference>
<dbReference type="GO" id="GO:0005829">
    <property type="term" value="C:cytosol"/>
    <property type="evidence" value="ECO:0007669"/>
    <property type="project" value="Ensembl"/>
</dbReference>
<dbReference type="GO" id="GO:0005524">
    <property type="term" value="F:ATP binding"/>
    <property type="evidence" value="ECO:0000250"/>
    <property type="project" value="UniProtKB"/>
</dbReference>
<dbReference type="GO" id="GO:0042802">
    <property type="term" value="F:identical protein binding"/>
    <property type="evidence" value="ECO:0007669"/>
    <property type="project" value="Ensembl"/>
</dbReference>
<dbReference type="GO" id="GO:0000287">
    <property type="term" value="F:magnesium ion binding"/>
    <property type="evidence" value="ECO:0000250"/>
    <property type="project" value="UniProtKB"/>
</dbReference>
<dbReference type="GO" id="GO:0019870">
    <property type="term" value="F:potassium channel inhibitor activity"/>
    <property type="evidence" value="ECO:0000316"/>
    <property type="project" value="ParkinsonsUK-UCL"/>
</dbReference>
<dbReference type="GO" id="GO:0019901">
    <property type="term" value="F:protein kinase binding"/>
    <property type="evidence" value="ECO:0007669"/>
    <property type="project" value="Ensembl"/>
</dbReference>
<dbReference type="GO" id="GO:0106310">
    <property type="term" value="F:protein serine kinase activity"/>
    <property type="evidence" value="ECO:0007669"/>
    <property type="project" value="RHEA"/>
</dbReference>
<dbReference type="GO" id="GO:0004674">
    <property type="term" value="F:protein serine/threonine kinase activity"/>
    <property type="evidence" value="ECO:0000316"/>
    <property type="project" value="ParkinsonsUK-UCL"/>
</dbReference>
<dbReference type="GO" id="GO:0044325">
    <property type="term" value="F:transmembrane transporter binding"/>
    <property type="evidence" value="ECO:0000353"/>
    <property type="project" value="ARUK-UCL"/>
</dbReference>
<dbReference type="GO" id="GO:0006884">
    <property type="term" value="P:cell volume homeostasis"/>
    <property type="evidence" value="ECO:0007669"/>
    <property type="project" value="Ensembl"/>
</dbReference>
<dbReference type="GO" id="GO:0071474">
    <property type="term" value="P:cellular hyperosmotic response"/>
    <property type="evidence" value="ECO:0007669"/>
    <property type="project" value="Ensembl"/>
</dbReference>
<dbReference type="GO" id="GO:0071476">
    <property type="term" value="P:cellular hypotonic response"/>
    <property type="evidence" value="ECO:0000316"/>
    <property type="project" value="ParkinsonsUK-UCL"/>
</dbReference>
<dbReference type="GO" id="GO:1990869">
    <property type="term" value="P:cellular response to chemokine"/>
    <property type="evidence" value="ECO:0000315"/>
    <property type="project" value="BHF-UCL"/>
</dbReference>
<dbReference type="GO" id="GO:0038116">
    <property type="term" value="P:chemokine (C-C motif) ligand 21 signaling pathway"/>
    <property type="evidence" value="ECO:0000315"/>
    <property type="project" value="BHF-UCL"/>
</dbReference>
<dbReference type="GO" id="GO:0038146">
    <property type="term" value="P:chemokine (C-X-C motif) ligand 12 signaling pathway"/>
    <property type="evidence" value="ECO:0007669"/>
    <property type="project" value="Ensembl"/>
</dbReference>
<dbReference type="GO" id="GO:0035556">
    <property type="term" value="P:intracellular signal transduction"/>
    <property type="evidence" value="ECO:0000316"/>
    <property type="project" value="ParkinsonsUK-UCL"/>
</dbReference>
<dbReference type="GO" id="GO:1901380">
    <property type="term" value="P:negative regulation of potassium ion transmembrane transport"/>
    <property type="evidence" value="ECO:0000316"/>
    <property type="project" value="ParkinsonsUK-UCL"/>
</dbReference>
<dbReference type="GO" id="GO:0007231">
    <property type="term" value="P:osmosensory signaling pathway"/>
    <property type="evidence" value="ECO:0007669"/>
    <property type="project" value="Ensembl"/>
</dbReference>
<dbReference type="GO" id="GO:0010820">
    <property type="term" value="P:positive regulation of T cell chemotaxis"/>
    <property type="evidence" value="ECO:0000315"/>
    <property type="project" value="BHF-UCL"/>
</dbReference>
<dbReference type="GO" id="GO:0046777">
    <property type="term" value="P:protein autophosphorylation"/>
    <property type="evidence" value="ECO:0000250"/>
    <property type="project" value="UniProtKB"/>
</dbReference>
<dbReference type="GO" id="GO:0006468">
    <property type="term" value="P:protein phosphorylation"/>
    <property type="evidence" value="ECO:0000250"/>
    <property type="project" value="UniProtKB"/>
</dbReference>
<dbReference type="GO" id="GO:0070294">
    <property type="term" value="P:renal sodium ion absorption"/>
    <property type="evidence" value="ECO:0007669"/>
    <property type="project" value="Ensembl"/>
</dbReference>
<dbReference type="GO" id="GO:0006979">
    <property type="term" value="P:response to oxidative stress"/>
    <property type="evidence" value="ECO:0000314"/>
    <property type="project" value="UniProtKB"/>
</dbReference>
<dbReference type="GO" id="GO:0009410">
    <property type="term" value="P:response to xenobiotic stimulus"/>
    <property type="evidence" value="ECO:0000316"/>
    <property type="project" value="MGI"/>
</dbReference>
<dbReference type="CDD" id="cd06610">
    <property type="entry name" value="STKc_OSR1_SPAK"/>
    <property type="match status" value="1"/>
</dbReference>
<dbReference type="FunFam" id="3.10.20.90:FF:000043">
    <property type="entry name" value="serine/threonine-protein kinase OSR1 isoform X1"/>
    <property type="match status" value="1"/>
</dbReference>
<dbReference type="FunFam" id="3.30.200.20:FF:000114">
    <property type="entry name" value="serine/threonine-protein kinase OSR1 isoform X1"/>
    <property type="match status" value="1"/>
</dbReference>
<dbReference type="FunFam" id="1.10.510.10:FF:000068">
    <property type="entry name" value="STE20/SPS1-related proline-alanine-rich protein kinase"/>
    <property type="match status" value="1"/>
</dbReference>
<dbReference type="Gene3D" id="3.10.20.90">
    <property type="entry name" value="Phosphatidylinositol 3-kinase Catalytic Subunit, Chain A, domain 1"/>
    <property type="match status" value="1"/>
</dbReference>
<dbReference type="Gene3D" id="3.30.200.20">
    <property type="entry name" value="Phosphorylase Kinase, domain 1"/>
    <property type="match status" value="1"/>
</dbReference>
<dbReference type="Gene3D" id="1.10.510.10">
    <property type="entry name" value="Transferase(Phosphotransferase) domain 1"/>
    <property type="match status" value="1"/>
</dbReference>
<dbReference type="InterPro" id="IPR011009">
    <property type="entry name" value="Kinase-like_dom_sf"/>
</dbReference>
<dbReference type="InterPro" id="IPR024678">
    <property type="entry name" value="Kinase_OSR1/WNK_CCT"/>
</dbReference>
<dbReference type="InterPro" id="IPR000719">
    <property type="entry name" value="Prot_kinase_dom"/>
</dbReference>
<dbReference type="InterPro" id="IPR017441">
    <property type="entry name" value="Protein_kinase_ATP_BS"/>
</dbReference>
<dbReference type="InterPro" id="IPR050629">
    <property type="entry name" value="STE20/SPS1-PAK"/>
</dbReference>
<dbReference type="PANTHER" id="PTHR48012:SF1">
    <property type="entry name" value="SERINE_THREONINE-PROTEIN KINASE OSR1"/>
    <property type="match status" value="1"/>
</dbReference>
<dbReference type="PANTHER" id="PTHR48012">
    <property type="entry name" value="STERILE20-LIKE KINASE, ISOFORM B-RELATED"/>
    <property type="match status" value="1"/>
</dbReference>
<dbReference type="Pfam" id="PF12202">
    <property type="entry name" value="OSR1_C"/>
    <property type="match status" value="1"/>
</dbReference>
<dbReference type="Pfam" id="PF00069">
    <property type="entry name" value="Pkinase"/>
    <property type="match status" value="1"/>
</dbReference>
<dbReference type="SMART" id="SM00220">
    <property type="entry name" value="S_TKc"/>
    <property type="match status" value="1"/>
</dbReference>
<dbReference type="SUPFAM" id="SSF56112">
    <property type="entry name" value="Protein kinase-like (PK-like)"/>
    <property type="match status" value="1"/>
</dbReference>
<dbReference type="PROSITE" id="PS00107">
    <property type="entry name" value="PROTEIN_KINASE_ATP"/>
    <property type="match status" value="1"/>
</dbReference>
<dbReference type="PROSITE" id="PS50011">
    <property type="entry name" value="PROTEIN_KINASE_DOM"/>
    <property type="match status" value="1"/>
</dbReference>
<proteinExistence type="evidence at protein level"/>
<sequence length="527" mass="58214">MSEDSSALPWSINRDDYELQEVIGSGATAVVQAAYCAPKKERVAIKRINLEKCQTSMDELLKEIQAMSQCHHPNIVSYYTSFVVKDELWLVMKLLSGGSVLDIIKHIVAKGEHKSGVLDEPTIATILREVLEGLEYLHKNGQIHRDVKAGNILLGEDGSVQIADFGVSAFLATGGDITRNKVRKTFVGTPCWMAPEVMEQVRGYDFKADIWSFGITAIELATGAAPYHKYPPMKVLMLTLQNDPPSLETGVQDKEMLKKYGKSFRKMISLCLQKDPEKRPTAAELLRHKFFQKAKNKEFLQEKILQRAPTISERSKKVRRVPGSSGRLHKTEDGGWEWSDDEFDEESEEGRAAISQLRSPRVKDSLSSSELFAAAEPMGTLLQVPEQISAHLPQPAGQMPTQPAQVSLLPPAEPAKPAQAQSSGERSQETKIPISLVLRLRNSKKELNDIRFEFTPGRDTAEGVSQELISAGLVDGRDLVIVAANLQKIVEEPQSNRSVTFKLASGVEGSDIPDDGKLIGFAQLSIS</sequence>
<reference evidence="14 15" key="1">
    <citation type="journal article" date="2004" name="Genome Res.">
        <title>The status, quality, and expansion of the NIH full-length cDNA project: the Mammalian Gene Collection (MGC).</title>
        <authorList>
            <consortium name="The MGC Project Team"/>
        </authorList>
    </citation>
    <scope>NUCLEOTIDE SEQUENCE [LARGE SCALE MRNA]</scope>
    <source>
        <strain evidence="15">C57BL/6J</strain>
        <tissue evidence="15">Brain</tissue>
    </source>
</reference>
<reference key="2">
    <citation type="journal article" date="2005" name="Science">
        <title>The transcriptional landscape of the mammalian genome.</title>
        <authorList>
            <person name="Carninci P."/>
            <person name="Kasukawa T."/>
            <person name="Katayama S."/>
            <person name="Gough J."/>
            <person name="Frith M.C."/>
            <person name="Maeda N."/>
            <person name="Oyama R."/>
            <person name="Ravasi T."/>
            <person name="Lenhard B."/>
            <person name="Wells C."/>
            <person name="Kodzius R."/>
            <person name="Shimokawa K."/>
            <person name="Bajic V.B."/>
            <person name="Brenner S.E."/>
            <person name="Batalov S."/>
            <person name="Forrest A.R."/>
            <person name="Zavolan M."/>
            <person name="Davis M.J."/>
            <person name="Wilming L.G."/>
            <person name="Aidinis V."/>
            <person name="Allen J.E."/>
            <person name="Ambesi-Impiombato A."/>
            <person name="Apweiler R."/>
            <person name="Aturaliya R.N."/>
            <person name="Bailey T.L."/>
            <person name="Bansal M."/>
            <person name="Baxter L."/>
            <person name="Beisel K.W."/>
            <person name="Bersano T."/>
            <person name="Bono H."/>
            <person name="Chalk A.M."/>
            <person name="Chiu K.P."/>
            <person name="Choudhary V."/>
            <person name="Christoffels A."/>
            <person name="Clutterbuck D.R."/>
            <person name="Crowe M.L."/>
            <person name="Dalla E."/>
            <person name="Dalrymple B.P."/>
            <person name="de Bono B."/>
            <person name="Della Gatta G."/>
            <person name="di Bernardo D."/>
            <person name="Down T."/>
            <person name="Engstrom P."/>
            <person name="Fagiolini M."/>
            <person name="Faulkner G."/>
            <person name="Fletcher C.F."/>
            <person name="Fukushima T."/>
            <person name="Furuno M."/>
            <person name="Futaki S."/>
            <person name="Gariboldi M."/>
            <person name="Georgii-Hemming P."/>
            <person name="Gingeras T.R."/>
            <person name="Gojobori T."/>
            <person name="Green R.E."/>
            <person name="Gustincich S."/>
            <person name="Harbers M."/>
            <person name="Hayashi Y."/>
            <person name="Hensch T.K."/>
            <person name="Hirokawa N."/>
            <person name="Hill D."/>
            <person name="Huminiecki L."/>
            <person name="Iacono M."/>
            <person name="Ikeo K."/>
            <person name="Iwama A."/>
            <person name="Ishikawa T."/>
            <person name="Jakt M."/>
            <person name="Kanapin A."/>
            <person name="Katoh M."/>
            <person name="Kawasawa Y."/>
            <person name="Kelso J."/>
            <person name="Kitamura H."/>
            <person name="Kitano H."/>
            <person name="Kollias G."/>
            <person name="Krishnan S.P."/>
            <person name="Kruger A."/>
            <person name="Kummerfeld S.K."/>
            <person name="Kurochkin I.V."/>
            <person name="Lareau L.F."/>
            <person name="Lazarevic D."/>
            <person name="Lipovich L."/>
            <person name="Liu J."/>
            <person name="Liuni S."/>
            <person name="McWilliam S."/>
            <person name="Madan Babu M."/>
            <person name="Madera M."/>
            <person name="Marchionni L."/>
            <person name="Matsuda H."/>
            <person name="Matsuzawa S."/>
            <person name="Miki H."/>
            <person name="Mignone F."/>
            <person name="Miyake S."/>
            <person name="Morris K."/>
            <person name="Mottagui-Tabar S."/>
            <person name="Mulder N."/>
            <person name="Nakano N."/>
            <person name="Nakauchi H."/>
            <person name="Ng P."/>
            <person name="Nilsson R."/>
            <person name="Nishiguchi S."/>
            <person name="Nishikawa S."/>
            <person name="Nori F."/>
            <person name="Ohara O."/>
            <person name="Okazaki Y."/>
            <person name="Orlando V."/>
            <person name="Pang K.C."/>
            <person name="Pavan W.J."/>
            <person name="Pavesi G."/>
            <person name="Pesole G."/>
            <person name="Petrovsky N."/>
            <person name="Piazza S."/>
            <person name="Reed J."/>
            <person name="Reid J.F."/>
            <person name="Ring B.Z."/>
            <person name="Ringwald M."/>
            <person name="Rost B."/>
            <person name="Ruan Y."/>
            <person name="Salzberg S.L."/>
            <person name="Sandelin A."/>
            <person name="Schneider C."/>
            <person name="Schoenbach C."/>
            <person name="Sekiguchi K."/>
            <person name="Semple C.A."/>
            <person name="Seno S."/>
            <person name="Sessa L."/>
            <person name="Sheng Y."/>
            <person name="Shibata Y."/>
            <person name="Shimada H."/>
            <person name="Shimada K."/>
            <person name="Silva D."/>
            <person name="Sinclair B."/>
            <person name="Sperling S."/>
            <person name="Stupka E."/>
            <person name="Sugiura K."/>
            <person name="Sultana R."/>
            <person name="Takenaka Y."/>
            <person name="Taki K."/>
            <person name="Tammoja K."/>
            <person name="Tan S.L."/>
            <person name="Tang S."/>
            <person name="Taylor M.S."/>
            <person name="Tegner J."/>
            <person name="Teichmann S.A."/>
            <person name="Ueda H.R."/>
            <person name="van Nimwegen E."/>
            <person name="Verardo R."/>
            <person name="Wei C.L."/>
            <person name="Yagi K."/>
            <person name="Yamanishi H."/>
            <person name="Zabarovsky E."/>
            <person name="Zhu S."/>
            <person name="Zimmer A."/>
            <person name="Hide W."/>
            <person name="Bult C."/>
            <person name="Grimmond S.M."/>
            <person name="Teasdale R.D."/>
            <person name="Liu E.T."/>
            <person name="Brusic V."/>
            <person name="Quackenbush J."/>
            <person name="Wahlestedt C."/>
            <person name="Mattick J.S."/>
            <person name="Hume D.A."/>
            <person name="Kai C."/>
            <person name="Sasaki D."/>
            <person name="Tomaru Y."/>
            <person name="Fukuda S."/>
            <person name="Kanamori-Katayama M."/>
            <person name="Suzuki M."/>
            <person name="Aoki J."/>
            <person name="Arakawa T."/>
            <person name="Iida J."/>
            <person name="Imamura K."/>
            <person name="Itoh M."/>
            <person name="Kato T."/>
            <person name="Kawaji H."/>
            <person name="Kawagashira N."/>
            <person name="Kawashima T."/>
            <person name="Kojima M."/>
            <person name="Kondo S."/>
            <person name="Konno H."/>
            <person name="Nakano K."/>
            <person name="Ninomiya N."/>
            <person name="Nishio T."/>
            <person name="Okada M."/>
            <person name="Plessy C."/>
            <person name="Shibata K."/>
            <person name="Shiraki T."/>
            <person name="Suzuki S."/>
            <person name="Tagami M."/>
            <person name="Waki K."/>
            <person name="Watahiki A."/>
            <person name="Okamura-Oho Y."/>
            <person name="Suzuki H."/>
            <person name="Kawai J."/>
            <person name="Hayashizaki Y."/>
        </authorList>
    </citation>
    <scope>NUCLEOTIDE SEQUENCE [LARGE SCALE MRNA] OF 48-527</scope>
    <source>
        <strain>C57BL/6J</strain>
        <tissue>Head</tissue>
        <tissue>Stomach</tissue>
    </source>
</reference>
<reference evidence="14" key="3">
    <citation type="journal article" date="2002" name="J. Biol. Chem.">
        <title>Cation chloride cotransporters interact with the stress-related kinases Ste20-related proline-alanine-rich kinase (SPAK) and oxidative stress response 1 (OSR1).</title>
        <authorList>
            <person name="Piechotta K."/>
            <person name="Lu J."/>
            <person name="Delpire E."/>
        </authorList>
    </citation>
    <scope>FUNCTION</scope>
</reference>
<reference evidence="14" key="4">
    <citation type="journal article" date="2004" name="J. Biol. Chem.">
        <title>Characterization of OSR1, a member of the mammalian Ste20p/germinal center kinase subfamily.</title>
        <authorList>
            <person name="Chen W."/>
            <person name="Yazicioglu M."/>
            <person name="Cobb M.H."/>
        </authorList>
    </citation>
    <scope>TISSUE SPECIFICITY</scope>
</reference>
<reference key="5">
    <citation type="journal article" date="2004" name="Mol. Cell. Proteomics">
        <title>Phosphoproteomic analysis of the developing mouse brain.</title>
        <authorList>
            <person name="Ballif B.A."/>
            <person name="Villen J."/>
            <person name="Beausoleil S.A."/>
            <person name="Schwartz D."/>
            <person name="Gygi S.P."/>
        </authorList>
    </citation>
    <scope>PHOSPHORYLATION [LARGE SCALE ANALYSIS] AT SER-339</scope>
    <scope>IDENTIFICATION BY MASS SPECTROMETRY [LARGE SCALE ANALYSIS]</scope>
    <source>
        <tissue>Embryonic brain</tissue>
    </source>
</reference>
<reference key="6">
    <citation type="journal article" date="2005" name="J. Biol. Chem.">
        <title>WNK1 regulates phosphorylation of cation-chloride-coupled cotransporters via the STE20-related kinases, SPAK and OSR1.</title>
        <authorList>
            <person name="Moriguchi T."/>
            <person name="Urushiyama S."/>
            <person name="Hisamoto N."/>
            <person name="Iemura S."/>
            <person name="Uchida S."/>
            <person name="Natsume T."/>
            <person name="Matsumoto K."/>
            <person name="Shibuya H."/>
        </authorList>
    </citation>
    <scope>ACTIVITY REGULATION</scope>
    <scope>PHOSPHORYLATION AT SER-325</scope>
</reference>
<reference key="7">
    <citation type="journal article" date="2006" name="Mol. Cell. Biol.">
        <title>Characterization of SPAK and OSR1, regulatory kinases of the Na-K-2Cl cotransporter.</title>
        <authorList>
            <person name="Gagnon K.B."/>
            <person name="England R."/>
            <person name="Delpire E."/>
        </authorList>
    </citation>
    <scope>FUNCTION</scope>
    <scope>CATALYTIC ACTIVITY</scope>
</reference>
<reference key="8">
    <citation type="journal article" date="2007" name="Cell Metab.">
        <title>Molecular pathogenesis of pseudohypoaldosteronism type II: generation and analysis of a Wnk4(D561A/+) knockin mouse model.</title>
        <authorList>
            <person name="Yang S.S."/>
            <person name="Morimoto T."/>
            <person name="Rai T."/>
            <person name="Chiga M."/>
            <person name="Sohara E."/>
            <person name="Ohno M."/>
            <person name="Uchida K."/>
            <person name="Lin S.H."/>
            <person name="Moriguchi T."/>
            <person name="Shibuya H."/>
            <person name="Kondo Y."/>
            <person name="Sasaki S."/>
            <person name="Uchida S."/>
        </authorList>
    </citation>
    <scope>FUNCTION</scope>
</reference>
<reference key="9">
    <citation type="journal article" date="2007" name="Proc. Natl. Acad. Sci. U.S.A.">
        <title>Large-scale phosphorylation analysis of mouse liver.</title>
        <authorList>
            <person name="Villen J."/>
            <person name="Beausoleil S.A."/>
            <person name="Gerber S.A."/>
            <person name="Gygi S.P."/>
        </authorList>
    </citation>
    <scope>PHOSPHORYLATION [LARGE SCALE ANALYSIS] AT SER-339</scope>
    <scope>IDENTIFICATION BY MASS SPECTROMETRY [LARGE SCALE ANALYSIS]</scope>
    <source>
        <tissue>Liver</tissue>
    </source>
</reference>
<reference key="10">
    <citation type="journal article" date="2009" name="Hum. Mol. Genet.">
        <title>Targeted disruption of the Wnk4 gene decreases phosphorylation of Na-Cl cotransporter, increases Na excretion and lowers blood pressure.</title>
        <authorList>
            <person name="Ohta A."/>
            <person name="Rai T."/>
            <person name="Yui N."/>
            <person name="Chiga M."/>
            <person name="Yang S.S."/>
            <person name="Lin S.H."/>
            <person name="Sohara E."/>
            <person name="Sasaki S."/>
            <person name="Uchida S."/>
        </authorList>
    </citation>
    <scope>FUNCTION</scope>
</reference>
<reference key="11">
    <citation type="journal article" date="2010" name="Cell">
        <title>A tissue-specific atlas of mouse protein phosphorylation and expression.</title>
        <authorList>
            <person name="Huttlin E.L."/>
            <person name="Jedrychowski M.P."/>
            <person name="Elias J.E."/>
            <person name="Goswami T."/>
            <person name="Rad R."/>
            <person name="Beausoleil S.A."/>
            <person name="Villen J."/>
            <person name="Haas W."/>
            <person name="Sowa M.E."/>
            <person name="Gygi S.P."/>
        </authorList>
    </citation>
    <scope>PHOSPHORYLATION [LARGE SCALE ANALYSIS] AT SER-339</scope>
    <scope>IDENTIFICATION BY MASS SPECTROMETRY [LARGE SCALE ANALYSIS]</scope>
    <source>
        <tissue>Brain</tissue>
        <tissue>Brown adipose tissue</tissue>
        <tissue>Heart</tissue>
        <tissue>Kidney</tissue>
        <tissue>Liver</tissue>
        <tissue>Lung</tissue>
        <tissue>Pancreas</tissue>
        <tissue>Spleen</tissue>
        <tissue>Testis</tissue>
    </source>
</reference>
<reference key="12">
    <citation type="journal article" date="2011" name="J. Cell Sci.">
        <title>Phenotypes of pseudohypoaldosteronism type II caused by the WNK4 D561A missense mutation are dependent on the WNK-OSR1/SPAK kinase cascade.</title>
        <authorList>
            <person name="Chiga M."/>
            <person name="Rafiqi F.H."/>
            <person name="Alessi D.R."/>
            <person name="Sohara E."/>
            <person name="Ohta A."/>
            <person name="Rai T."/>
            <person name="Sasaki S."/>
            <person name="Uchida S."/>
        </authorList>
    </citation>
    <scope>FUNCTION</scope>
    <scope>ACTIVITY REGULATION</scope>
    <scope>PHOSPHORYLATION AT THR-185</scope>
    <scope>MUTAGENESIS OF THR-185</scope>
</reference>
<reference key="13">
    <citation type="journal article" date="2011" name="Proc. Natl. Acad. Sci. U.S.A.">
        <title>Impaired phosphorylation of Na(+)-K(+)-2Cl(-) cotransporter by oxidative stress-responsive kinase-1 deficiency manifests hypotension and Bartter-like syndrome.</title>
        <authorList>
            <person name="Lin S.H."/>
            <person name="Yu I.S."/>
            <person name="Jiang S.T."/>
            <person name="Lin S.W."/>
            <person name="Chu P."/>
            <person name="Chen A."/>
            <person name="Sytwu H.K."/>
            <person name="Sohara E."/>
            <person name="Uchida S."/>
            <person name="Sasaki S."/>
            <person name="Yang S.S."/>
        </authorList>
    </citation>
    <scope>FUNCTION</scope>
</reference>
<reference key="14">
    <citation type="journal article" date="2013" name="J. Biol. Chem.">
        <title>WNK1 protein kinase regulates embryonic cardiovascular development through the OSR1 signaling cascade.</title>
        <authorList>
            <person name="Xie J."/>
            <person name="Yoon J."/>
            <person name="Yang S.S."/>
            <person name="Lin S.H."/>
            <person name="Huang C.L."/>
        </authorList>
    </citation>
    <scope>FUNCTION</scope>
    <scope>DISRUPTION PHENOTYPE</scope>
</reference>
<accession>Q6P9R2</accession>
<accession>Q8BVZ9</accession>
<accession>Q8C0B9</accession>
<name>OXSR1_MOUSE</name>
<comment type="function">
    <text evidence="1 5 8 9 10 11 12">Effector serine/threonine-protein kinase component of the WNK-SPAK/OSR1 kinase cascade, which is involved in various processes, such as ion transport, response to hypertonic stress and blood pressure (PubMed:17488636, PubMed:19633012, PubMed:21486947). Specifically recognizes and binds proteins with a RFXV motif (By similarity). Acts downstream of WNK kinases (WNK1, WNK2, WNK3 or WNK4): following activation by WNK kinases, catalyzes phosphorylation of ion cotransporters, such as SLC12A1/NKCC2, SLC12A2/NKCC1, SLC12A3/NCC, SLC12A5/KCC2 or SLC12A6/KCC3, regulating their activity (PubMed:12386165, PubMed:16382158, PubMed:17488636, PubMed:19633012, PubMed:21486947). Mediates regulatory volume increase in response to hyperosmotic stress by catalyzing phosphorylation of ion cotransporters SLC12A1/NKCC2, SLC12A2/NKCC1 and SLC12A6/KCC3 downstream of WNK1 and WNK3 kinases (PubMed:16382158, PubMed:21972418). Phosphorylation of Na-K-Cl cotransporters SLC12A2/NKCC1 and SLC12A2/NKCC1 promote their activation and ion influx; simultaneously, phosphorylation of K-Cl cotransporters SLC12A5/KCC2 and SLC12A6/KCC3 inhibit their activity, blocking ion efflux (PubMed:16382158). Acts as a regulator of NaCl reabsorption in the distal nephron by mediating phosphorylation and activation of the thiazide-sensitive Na-Cl cotransporter SLC12A3/NCC in distal convoluted tubule cells of kidney downstream of WNK4 (PubMed:17488636, PubMed:19633012). Also acts as a regulator of angiogenesis in endothelial cells downstream of WNK1 (PubMed:21972418). Acts as an activator of inward rectifier potassium channels KCNJ2/Kir2.1 and KCNJ4/Kir2.3 downstream of WNK1: recognizes and binds the RXFXV/I variant motif on KCNJ2/Kir2.1 and KCNJ4/Kir2.3 and regulates their localization to the cell membrane without mediating their phosphorylation (By similarity). Phosphorylates RELL1, RELL2, RELT and PAK1 (By similarity). Phosphorylates PLSCR1 in the presence of RELT (By similarity).</text>
</comment>
<comment type="catalytic activity">
    <reaction evidence="8">
        <text>L-seryl-[protein] + ATP = O-phospho-L-seryl-[protein] + ADP + H(+)</text>
        <dbReference type="Rhea" id="RHEA:17989"/>
        <dbReference type="Rhea" id="RHEA-COMP:9863"/>
        <dbReference type="Rhea" id="RHEA-COMP:11604"/>
        <dbReference type="ChEBI" id="CHEBI:15378"/>
        <dbReference type="ChEBI" id="CHEBI:29999"/>
        <dbReference type="ChEBI" id="CHEBI:30616"/>
        <dbReference type="ChEBI" id="CHEBI:83421"/>
        <dbReference type="ChEBI" id="CHEBI:456216"/>
        <dbReference type="EC" id="2.7.11.1"/>
    </reaction>
</comment>
<comment type="catalytic activity">
    <reaction evidence="8 11">
        <text>L-threonyl-[protein] + ATP = O-phospho-L-threonyl-[protein] + ADP + H(+)</text>
        <dbReference type="Rhea" id="RHEA:46608"/>
        <dbReference type="Rhea" id="RHEA-COMP:11060"/>
        <dbReference type="Rhea" id="RHEA-COMP:11605"/>
        <dbReference type="ChEBI" id="CHEBI:15378"/>
        <dbReference type="ChEBI" id="CHEBI:30013"/>
        <dbReference type="ChEBI" id="CHEBI:30616"/>
        <dbReference type="ChEBI" id="CHEBI:61977"/>
        <dbReference type="ChEBI" id="CHEBI:456216"/>
        <dbReference type="EC" id="2.7.11.1"/>
    </reaction>
</comment>
<comment type="cofactor">
    <cofactor evidence="1">
        <name>Mg(2+)</name>
        <dbReference type="ChEBI" id="CHEBI:18420"/>
    </cofactor>
</comment>
<comment type="activity regulation">
    <text evidence="7 11">Activated following phosphorylation at Thr-185 by WNK kinases (WNK1, WNK2, WNK3 or WNK4).</text>
</comment>
<comment type="subcellular location">
    <subcellularLocation>
        <location evidence="1">Cytoplasm</location>
    </subcellularLocation>
</comment>
<comment type="tissue specificity">
    <text evidence="6">Ubiquitously expressed in all tissues examined, except thymus.</text>
</comment>
<comment type="PTM">
    <text evidence="1 11">Phosphorylation at Thr-185 by WNK kinases (WNK1, WNK2, WNK3 or WNK4) is required for activation (PubMed:21486947). Autophosphorylated; promoting its activity (By similarity).</text>
</comment>
<comment type="disruption phenotype">
    <text evidence="13">Embryonic lethality caused by angiogenesis and cardiac defects beginning at 10.5 dpc (PubMed:23386621). Conditional deletion in endothelial cells leads to cardiovascular developmental defects, leading to embryonic lethality (PubMed:23386621).</text>
</comment>
<comment type="similarity">
    <text evidence="14">Belongs to the protein kinase superfamily. STE Ser/Thr protein kinase family. STE20 subfamily.</text>
</comment>
<comment type="sequence caution" evidence="14">
    <conflict type="erroneous initiation">
        <sequence resource="EMBL-CDS" id="BAC27551"/>
    </conflict>
</comment>
<comment type="sequence caution" evidence="14">
    <conflict type="erroneous initiation">
        <sequence resource="EMBL-CDS" id="BAC35996"/>
    </conflict>
</comment>
<keyword id="KW-0007">Acetylation</keyword>
<keyword id="KW-0067">ATP-binding</keyword>
<keyword id="KW-0963">Cytoplasm</keyword>
<keyword id="KW-0418">Kinase</keyword>
<keyword id="KW-0460">Magnesium</keyword>
<keyword id="KW-0479">Metal-binding</keyword>
<keyword id="KW-0547">Nucleotide-binding</keyword>
<keyword id="KW-0597">Phosphoprotein</keyword>
<keyword id="KW-1185">Reference proteome</keyword>
<keyword id="KW-0723">Serine/threonine-protein kinase</keyword>
<keyword id="KW-0808">Transferase</keyword>
<organism>
    <name type="scientific">Mus musculus</name>
    <name type="common">Mouse</name>
    <dbReference type="NCBI Taxonomy" id="10090"/>
    <lineage>
        <taxon>Eukaryota</taxon>
        <taxon>Metazoa</taxon>
        <taxon>Chordata</taxon>
        <taxon>Craniata</taxon>
        <taxon>Vertebrata</taxon>
        <taxon>Euteleostomi</taxon>
        <taxon>Mammalia</taxon>
        <taxon>Eutheria</taxon>
        <taxon>Euarchontoglires</taxon>
        <taxon>Glires</taxon>
        <taxon>Rodentia</taxon>
        <taxon>Myomorpha</taxon>
        <taxon>Muroidea</taxon>
        <taxon>Muridae</taxon>
        <taxon>Murinae</taxon>
        <taxon>Mus</taxon>
        <taxon>Mus</taxon>
    </lineage>
</organism>
<gene>
    <name evidence="16" type="primary">Oxsr1</name>
    <name evidence="15" type="synonym">Osr1</name>
</gene>
<protein>
    <recommendedName>
        <fullName>Serine/threonine-protein kinase OSR1</fullName>
        <ecNumber evidence="8">2.7.11.1</ecNumber>
    </recommendedName>
    <alternativeName>
        <fullName>Oxidative stress-responsive 1 protein</fullName>
    </alternativeName>
</protein>
<evidence type="ECO:0000250" key="1">
    <source>
        <dbReference type="UniProtKB" id="O95747"/>
    </source>
</evidence>
<evidence type="ECO:0000250" key="2">
    <source>
        <dbReference type="UniProtKB" id="Q9Z1W9"/>
    </source>
</evidence>
<evidence type="ECO:0000255" key="3">
    <source>
        <dbReference type="PROSITE-ProRule" id="PRU00159"/>
    </source>
</evidence>
<evidence type="ECO:0000256" key="4">
    <source>
        <dbReference type="SAM" id="MobiDB-lite"/>
    </source>
</evidence>
<evidence type="ECO:0000269" key="5">
    <source>
    </source>
</evidence>
<evidence type="ECO:0000269" key="6">
    <source>
    </source>
</evidence>
<evidence type="ECO:0000269" key="7">
    <source>
    </source>
</evidence>
<evidence type="ECO:0000269" key="8">
    <source>
    </source>
</evidence>
<evidence type="ECO:0000269" key="9">
    <source>
    </source>
</evidence>
<evidence type="ECO:0000269" key="10">
    <source>
    </source>
</evidence>
<evidence type="ECO:0000269" key="11">
    <source>
    </source>
</evidence>
<evidence type="ECO:0000269" key="12">
    <source>
    </source>
</evidence>
<evidence type="ECO:0000269" key="13">
    <source>
    </source>
</evidence>
<evidence type="ECO:0000305" key="14"/>
<evidence type="ECO:0000312" key="15">
    <source>
        <dbReference type="EMBL" id="AAH60645.1"/>
    </source>
</evidence>
<evidence type="ECO:0000312" key="16">
    <source>
        <dbReference type="MGI" id="MGI:1917378"/>
    </source>
</evidence>
<evidence type="ECO:0007744" key="17">
    <source>
    </source>
</evidence>
<evidence type="ECO:0007744" key="18">
    <source>
    </source>
</evidence>
<evidence type="ECO:0007744" key="19">
    <source>
    </source>
</evidence>